<gene>
    <name evidence="1" type="primary">ndhE</name>
</gene>
<name>NU4LC_OENAR</name>
<organism>
    <name type="scientific">Oenothera argillicola</name>
    <name type="common">Appalachian evening primrose</name>
    <dbReference type="NCBI Taxonomy" id="3940"/>
    <lineage>
        <taxon>Eukaryota</taxon>
        <taxon>Viridiplantae</taxon>
        <taxon>Streptophyta</taxon>
        <taxon>Embryophyta</taxon>
        <taxon>Tracheophyta</taxon>
        <taxon>Spermatophyta</taxon>
        <taxon>Magnoliopsida</taxon>
        <taxon>eudicotyledons</taxon>
        <taxon>Gunneridae</taxon>
        <taxon>Pentapetalae</taxon>
        <taxon>rosids</taxon>
        <taxon>malvids</taxon>
        <taxon>Myrtales</taxon>
        <taxon>Onagraceae</taxon>
        <taxon>Onagroideae</taxon>
        <taxon>Onagreae</taxon>
        <taxon>Oenothera</taxon>
    </lineage>
</organism>
<keyword id="KW-0150">Chloroplast</keyword>
<keyword id="KW-0472">Membrane</keyword>
<keyword id="KW-0520">NAD</keyword>
<keyword id="KW-0521">NADP</keyword>
<keyword id="KW-0934">Plastid</keyword>
<keyword id="KW-0618">Plastoquinone</keyword>
<keyword id="KW-0874">Quinone</keyword>
<keyword id="KW-0793">Thylakoid</keyword>
<keyword id="KW-1278">Translocase</keyword>
<keyword id="KW-0812">Transmembrane</keyword>
<keyword id="KW-1133">Transmembrane helix</keyword>
<keyword id="KW-0813">Transport</keyword>
<geneLocation type="chloroplast"/>
<sequence>MILEHVLVLSAYLFSIGIYGLITSRNMVRALMCLELILNSVNLNFVTFSDFFDSRQLKGDIFSIFIIAIAAAEAAIGLAIVSSIYRNRKSIRINQSNLLNK</sequence>
<dbReference type="EC" id="7.1.1.-" evidence="1"/>
<dbReference type="EMBL" id="EU262887">
    <property type="protein sequence ID" value="ABW98755.1"/>
    <property type="molecule type" value="Genomic_DNA"/>
</dbReference>
<dbReference type="RefSeq" id="YP_001687188.1">
    <property type="nucleotide sequence ID" value="NC_010358.2"/>
</dbReference>
<dbReference type="SMR" id="B0Z4S7"/>
<dbReference type="GeneID" id="5951852"/>
<dbReference type="GO" id="GO:0009535">
    <property type="term" value="C:chloroplast thylakoid membrane"/>
    <property type="evidence" value="ECO:0007669"/>
    <property type="project" value="UniProtKB-SubCell"/>
</dbReference>
<dbReference type="GO" id="GO:0030964">
    <property type="term" value="C:NADH dehydrogenase complex"/>
    <property type="evidence" value="ECO:0007669"/>
    <property type="project" value="TreeGrafter"/>
</dbReference>
<dbReference type="GO" id="GO:0016655">
    <property type="term" value="F:oxidoreductase activity, acting on NAD(P)H, quinone or similar compound as acceptor"/>
    <property type="evidence" value="ECO:0007669"/>
    <property type="project" value="UniProtKB-UniRule"/>
</dbReference>
<dbReference type="GO" id="GO:0048038">
    <property type="term" value="F:quinone binding"/>
    <property type="evidence" value="ECO:0007669"/>
    <property type="project" value="UniProtKB-KW"/>
</dbReference>
<dbReference type="GO" id="GO:0042773">
    <property type="term" value="P:ATP synthesis coupled electron transport"/>
    <property type="evidence" value="ECO:0007669"/>
    <property type="project" value="InterPro"/>
</dbReference>
<dbReference type="GO" id="GO:0019684">
    <property type="term" value="P:photosynthesis, light reaction"/>
    <property type="evidence" value="ECO:0007669"/>
    <property type="project" value="UniProtKB-UniRule"/>
</dbReference>
<dbReference type="FunFam" id="1.10.287.3510:FF:000001">
    <property type="entry name" value="NADH-quinone oxidoreductase subunit K"/>
    <property type="match status" value="1"/>
</dbReference>
<dbReference type="Gene3D" id="1.10.287.3510">
    <property type="match status" value="1"/>
</dbReference>
<dbReference type="HAMAP" id="MF_01456">
    <property type="entry name" value="NDH1_NuoK"/>
    <property type="match status" value="1"/>
</dbReference>
<dbReference type="InterPro" id="IPR001133">
    <property type="entry name" value="NADH_UbQ_OxRdtase_chain4L/K"/>
</dbReference>
<dbReference type="InterPro" id="IPR039428">
    <property type="entry name" value="NUOK/Mnh_C1-like"/>
</dbReference>
<dbReference type="NCBIfam" id="NF004320">
    <property type="entry name" value="PRK05715.1-2"/>
    <property type="match status" value="1"/>
</dbReference>
<dbReference type="NCBIfam" id="NF004322">
    <property type="entry name" value="PRK05715.1-4"/>
    <property type="match status" value="1"/>
</dbReference>
<dbReference type="NCBIfam" id="NF004323">
    <property type="entry name" value="PRK05715.1-5"/>
    <property type="match status" value="1"/>
</dbReference>
<dbReference type="PANTHER" id="PTHR11434:SF16">
    <property type="entry name" value="NADH-UBIQUINONE OXIDOREDUCTASE CHAIN 4L"/>
    <property type="match status" value="1"/>
</dbReference>
<dbReference type="PANTHER" id="PTHR11434">
    <property type="entry name" value="NADH-UBIQUINONE OXIDOREDUCTASE SUBUNIT ND4L"/>
    <property type="match status" value="1"/>
</dbReference>
<dbReference type="Pfam" id="PF00420">
    <property type="entry name" value="Oxidored_q2"/>
    <property type="match status" value="1"/>
</dbReference>
<feature type="chain" id="PRO_0000360352" description="NAD(P)H-quinone oxidoreductase subunit 4L, chloroplastic">
    <location>
        <begin position="1"/>
        <end position="101"/>
    </location>
</feature>
<feature type="transmembrane region" description="Helical" evidence="1">
    <location>
        <begin position="2"/>
        <end position="22"/>
    </location>
</feature>
<feature type="transmembrane region" description="Helical" evidence="1">
    <location>
        <begin position="32"/>
        <end position="52"/>
    </location>
</feature>
<feature type="transmembrane region" description="Helical" evidence="1">
    <location>
        <begin position="61"/>
        <end position="81"/>
    </location>
</feature>
<accession>B0Z4S7</accession>
<evidence type="ECO:0000255" key="1">
    <source>
        <dbReference type="HAMAP-Rule" id="MF_01456"/>
    </source>
</evidence>
<protein>
    <recommendedName>
        <fullName evidence="1">NAD(P)H-quinone oxidoreductase subunit 4L, chloroplastic</fullName>
        <ecNumber evidence="1">7.1.1.-</ecNumber>
    </recommendedName>
    <alternativeName>
        <fullName evidence="1">NAD(P)H dehydrogenase subunit 4L</fullName>
    </alternativeName>
    <alternativeName>
        <fullName evidence="1">NADH-plastoquinone oxidoreductase subunit 4L</fullName>
    </alternativeName>
</protein>
<reference key="1">
    <citation type="journal article" date="2008" name="Nucleic Acids Res.">
        <title>The complete nucleotide sequences of the five genetically distinct plastid genomes of Oenothera, subsection Oenothera: I. Sequence evaluation and plastome evolution.</title>
        <authorList>
            <person name="Greiner S."/>
            <person name="Wang X."/>
            <person name="Rauwolf U."/>
            <person name="Silber M.V."/>
            <person name="Mayer K."/>
            <person name="Meurer J."/>
            <person name="Haberer G."/>
            <person name="Herrmann R.G."/>
        </authorList>
    </citation>
    <scope>NUCLEOTIDE SEQUENCE [LARGE SCALE GENOMIC DNA]</scope>
    <source>
        <strain>cv. Douthat 1</strain>
    </source>
</reference>
<comment type="function">
    <text evidence="1">NDH shuttles electrons from NAD(P)H:plastoquinone, via FMN and iron-sulfur (Fe-S) centers, to quinones in the photosynthetic chain and possibly in a chloroplast respiratory chain. The immediate electron acceptor for the enzyme in this species is believed to be plastoquinone. Couples the redox reaction to proton translocation, and thus conserves the redox energy in a proton gradient.</text>
</comment>
<comment type="catalytic activity">
    <reaction evidence="1">
        <text>a plastoquinone + NADH + (n+1) H(+)(in) = a plastoquinol + NAD(+) + n H(+)(out)</text>
        <dbReference type="Rhea" id="RHEA:42608"/>
        <dbReference type="Rhea" id="RHEA-COMP:9561"/>
        <dbReference type="Rhea" id="RHEA-COMP:9562"/>
        <dbReference type="ChEBI" id="CHEBI:15378"/>
        <dbReference type="ChEBI" id="CHEBI:17757"/>
        <dbReference type="ChEBI" id="CHEBI:57540"/>
        <dbReference type="ChEBI" id="CHEBI:57945"/>
        <dbReference type="ChEBI" id="CHEBI:62192"/>
    </reaction>
</comment>
<comment type="catalytic activity">
    <reaction evidence="1">
        <text>a plastoquinone + NADPH + (n+1) H(+)(in) = a plastoquinol + NADP(+) + n H(+)(out)</text>
        <dbReference type="Rhea" id="RHEA:42612"/>
        <dbReference type="Rhea" id="RHEA-COMP:9561"/>
        <dbReference type="Rhea" id="RHEA-COMP:9562"/>
        <dbReference type="ChEBI" id="CHEBI:15378"/>
        <dbReference type="ChEBI" id="CHEBI:17757"/>
        <dbReference type="ChEBI" id="CHEBI:57783"/>
        <dbReference type="ChEBI" id="CHEBI:58349"/>
        <dbReference type="ChEBI" id="CHEBI:62192"/>
    </reaction>
</comment>
<comment type="subunit">
    <text evidence="1">NDH is composed of at least 16 different subunits, 5 of which are encoded in the nucleus.</text>
</comment>
<comment type="subcellular location">
    <subcellularLocation>
        <location evidence="1">Plastid</location>
        <location evidence="1">Chloroplast thylakoid membrane</location>
        <topology evidence="1">Multi-pass membrane protein</topology>
    </subcellularLocation>
</comment>
<comment type="similarity">
    <text evidence="1">Belongs to the complex I subunit 4L family.</text>
</comment>
<proteinExistence type="inferred from homology"/>